<evidence type="ECO:0000255" key="1"/>
<evidence type="ECO:0000305" key="2"/>
<keyword id="KW-0472">Membrane</keyword>
<keyword id="KW-1185">Reference proteome</keyword>
<keyword id="KW-0812">Transmembrane</keyword>
<keyword id="KW-1133">Transmembrane helix</keyword>
<accession>O29506</accession>
<comment type="subcellular location">
    <subcellularLocation>
        <location evidence="2">Membrane</location>
        <topology evidence="2">Single-pass membrane protein</topology>
    </subcellularLocation>
</comment>
<name>Y752_ARCFU</name>
<reference key="1">
    <citation type="journal article" date="1997" name="Nature">
        <title>The complete genome sequence of the hyperthermophilic, sulphate-reducing archaeon Archaeoglobus fulgidus.</title>
        <authorList>
            <person name="Klenk H.-P."/>
            <person name="Clayton R.A."/>
            <person name="Tomb J.-F."/>
            <person name="White O."/>
            <person name="Nelson K.E."/>
            <person name="Ketchum K.A."/>
            <person name="Dodson R.J."/>
            <person name="Gwinn M.L."/>
            <person name="Hickey E.K."/>
            <person name="Peterson J.D."/>
            <person name="Richardson D.L."/>
            <person name="Kerlavage A.R."/>
            <person name="Graham D.E."/>
            <person name="Kyrpides N.C."/>
            <person name="Fleischmann R.D."/>
            <person name="Quackenbush J."/>
            <person name="Lee N.H."/>
            <person name="Sutton G.G."/>
            <person name="Gill S.R."/>
            <person name="Kirkness E.F."/>
            <person name="Dougherty B.A."/>
            <person name="McKenney K."/>
            <person name="Adams M.D."/>
            <person name="Loftus B.J."/>
            <person name="Peterson S.N."/>
            <person name="Reich C.I."/>
            <person name="McNeil L.K."/>
            <person name="Badger J.H."/>
            <person name="Glodek A."/>
            <person name="Zhou L."/>
            <person name="Overbeek R."/>
            <person name="Gocayne J.D."/>
            <person name="Weidman J.F."/>
            <person name="McDonald L.A."/>
            <person name="Utterback T.R."/>
            <person name="Cotton M.D."/>
            <person name="Spriggs T."/>
            <person name="Artiach P."/>
            <person name="Kaine B.P."/>
            <person name="Sykes S.M."/>
            <person name="Sadow P.W."/>
            <person name="D'Andrea K.P."/>
            <person name="Bowman C."/>
            <person name="Fujii C."/>
            <person name="Garland S.A."/>
            <person name="Mason T.M."/>
            <person name="Olsen G.J."/>
            <person name="Fraser C.M."/>
            <person name="Smith H.O."/>
            <person name="Woese C.R."/>
            <person name="Venter J.C."/>
        </authorList>
    </citation>
    <scope>NUCLEOTIDE SEQUENCE [LARGE SCALE GENOMIC DNA]</scope>
    <source>
        <strain>ATCC 49558 / DSM 4304 / JCM 9628 / NBRC 100126 / VC-16</strain>
    </source>
</reference>
<organism>
    <name type="scientific">Archaeoglobus fulgidus (strain ATCC 49558 / DSM 4304 / JCM 9628 / NBRC 100126 / VC-16)</name>
    <dbReference type="NCBI Taxonomy" id="224325"/>
    <lineage>
        <taxon>Archaea</taxon>
        <taxon>Methanobacteriati</taxon>
        <taxon>Methanobacteriota</taxon>
        <taxon>Archaeoglobi</taxon>
        <taxon>Archaeoglobales</taxon>
        <taxon>Archaeoglobaceae</taxon>
        <taxon>Archaeoglobus</taxon>
    </lineage>
</organism>
<dbReference type="EMBL" id="AE000782">
    <property type="protein sequence ID" value="AAB90497.1"/>
    <property type="molecule type" value="Genomic_DNA"/>
</dbReference>
<dbReference type="PIR" id="H69343">
    <property type="entry name" value="H69343"/>
</dbReference>
<dbReference type="RefSeq" id="WP_010878255.1">
    <property type="nucleotide sequence ID" value="NC_000917.1"/>
</dbReference>
<dbReference type="STRING" id="224325.AF_0752"/>
<dbReference type="PaxDb" id="224325-AF_0752"/>
<dbReference type="EnsemblBacteria" id="AAB90497">
    <property type="protein sequence ID" value="AAB90497"/>
    <property type="gene ID" value="AF_0752"/>
</dbReference>
<dbReference type="KEGG" id="afu:AF_0752"/>
<dbReference type="eggNOG" id="arCOG10222">
    <property type="taxonomic scope" value="Archaea"/>
</dbReference>
<dbReference type="HOGENOM" id="CLU_2433681_0_0_2"/>
<dbReference type="OrthoDB" id="50082at2157"/>
<dbReference type="Proteomes" id="UP000002199">
    <property type="component" value="Chromosome"/>
</dbReference>
<dbReference type="GO" id="GO:0016020">
    <property type="term" value="C:membrane"/>
    <property type="evidence" value="ECO:0007669"/>
    <property type="project" value="UniProtKB-SubCell"/>
</dbReference>
<gene>
    <name type="ordered locus">AF_0752</name>
</gene>
<feature type="chain" id="PRO_0000127917" description="Uncharacterized protein AF_0752">
    <location>
        <begin position="1"/>
        <end position="89"/>
    </location>
</feature>
<feature type="transmembrane region" description="Helical" evidence="1">
    <location>
        <begin position="28"/>
        <end position="50"/>
    </location>
</feature>
<sequence>MKLSIADFEEWLRERGYDLMMGEQNFRLYLDLGFSALLFYNSNLLFSFILDKVGLKSADERVPDRLRFEIAKRLRRIEATKDEIEIELL</sequence>
<protein>
    <recommendedName>
        <fullName>Uncharacterized protein AF_0752</fullName>
    </recommendedName>
</protein>
<proteinExistence type="predicted"/>